<feature type="chain" id="PRO_0000138864" description="Protease HtpX">
    <location>
        <begin position="1"/>
        <end position="289"/>
    </location>
</feature>
<feature type="transmembrane region" description="Helical" evidence="1">
    <location>
        <begin position="6"/>
        <end position="26"/>
    </location>
</feature>
<feature type="transmembrane region" description="Helical" evidence="1">
    <location>
        <begin position="38"/>
        <end position="58"/>
    </location>
</feature>
<feature type="transmembrane region" description="Helical" evidence="1">
    <location>
        <begin position="152"/>
        <end position="172"/>
    </location>
</feature>
<feature type="transmembrane region" description="Helical" evidence="1">
    <location>
        <begin position="194"/>
        <end position="214"/>
    </location>
</feature>
<feature type="active site" evidence="1">
    <location>
        <position position="145"/>
    </location>
</feature>
<feature type="binding site" evidence="1">
    <location>
        <position position="144"/>
    </location>
    <ligand>
        <name>Zn(2+)</name>
        <dbReference type="ChEBI" id="CHEBI:29105"/>
        <note>catalytic</note>
    </ligand>
</feature>
<feature type="binding site" evidence="1">
    <location>
        <position position="148"/>
    </location>
    <ligand>
        <name>Zn(2+)</name>
        <dbReference type="ChEBI" id="CHEBI:29105"/>
        <note>catalytic</note>
    </ligand>
</feature>
<feature type="binding site" evidence="1">
    <location>
        <position position="223"/>
    </location>
    <ligand>
        <name>Zn(2+)</name>
        <dbReference type="ChEBI" id="CHEBI:29105"/>
        <note>catalytic</note>
    </ligand>
</feature>
<gene>
    <name evidence="1" type="primary">htpX</name>
    <name type="ordered locus">HD_0353</name>
</gene>
<name>HTPX_HAEDU</name>
<evidence type="ECO:0000255" key="1">
    <source>
        <dbReference type="HAMAP-Rule" id="MF_00188"/>
    </source>
</evidence>
<proteinExistence type="inferred from homology"/>
<reference key="1">
    <citation type="submission" date="2003-06" db="EMBL/GenBank/DDBJ databases">
        <title>The complete genome sequence of Haemophilus ducreyi.</title>
        <authorList>
            <person name="Munson R.S. Jr."/>
            <person name="Ray W.C."/>
            <person name="Mahairas G."/>
            <person name="Sabo P."/>
            <person name="Mungur R."/>
            <person name="Johnson L."/>
            <person name="Nguyen D."/>
            <person name="Wang J."/>
            <person name="Forst C."/>
            <person name="Hood L."/>
        </authorList>
    </citation>
    <scope>NUCLEOTIDE SEQUENCE [LARGE SCALE GENOMIC DNA]</scope>
    <source>
        <strain>35000HP / ATCC 700724</strain>
    </source>
</reference>
<accession>Q7VNX2</accession>
<comment type="cofactor">
    <cofactor evidence="1">
        <name>Zn(2+)</name>
        <dbReference type="ChEBI" id="CHEBI:29105"/>
    </cofactor>
    <text evidence="1">Binds 1 zinc ion per subunit.</text>
</comment>
<comment type="subcellular location">
    <subcellularLocation>
        <location evidence="1">Cell inner membrane</location>
        <topology evidence="1">Multi-pass membrane protein</topology>
    </subcellularLocation>
</comment>
<comment type="similarity">
    <text evidence="1">Belongs to the peptidase M48B family.</text>
</comment>
<dbReference type="EC" id="3.4.24.-" evidence="1"/>
<dbReference type="EMBL" id="AE017143">
    <property type="protein sequence ID" value="AAP95325.1"/>
    <property type="molecule type" value="Genomic_DNA"/>
</dbReference>
<dbReference type="RefSeq" id="WP_010944378.1">
    <property type="nucleotide sequence ID" value="NC_002940.2"/>
</dbReference>
<dbReference type="SMR" id="Q7VNX2"/>
<dbReference type="STRING" id="233412.HD_0353"/>
<dbReference type="MEROPS" id="M48.002"/>
<dbReference type="KEGG" id="hdu:HD_0353"/>
<dbReference type="eggNOG" id="COG0501">
    <property type="taxonomic scope" value="Bacteria"/>
</dbReference>
<dbReference type="HOGENOM" id="CLU_042266_1_0_6"/>
<dbReference type="OrthoDB" id="15218at2"/>
<dbReference type="Proteomes" id="UP000001022">
    <property type="component" value="Chromosome"/>
</dbReference>
<dbReference type="GO" id="GO:0005886">
    <property type="term" value="C:plasma membrane"/>
    <property type="evidence" value="ECO:0007669"/>
    <property type="project" value="UniProtKB-SubCell"/>
</dbReference>
<dbReference type="GO" id="GO:0004222">
    <property type="term" value="F:metalloendopeptidase activity"/>
    <property type="evidence" value="ECO:0007669"/>
    <property type="project" value="UniProtKB-UniRule"/>
</dbReference>
<dbReference type="GO" id="GO:0008270">
    <property type="term" value="F:zinc ion binding"/>
    <property type="evidence" value="ECO:0007669"/>
    <property type="project" value="UniProtKB-UniRule"/>
</dbReference>
<dbReference type="GO" id="GO:0006508">
    <property type="term" value="P:proteolysis"/>
    <property type="evidence" value="ECO:0007669"/>
    <property type="project" value="UniProtKB-KW"/>
</dbReference>
<dbReference type="CDD" id="cd07335">
    <property type="entry name" value="M48B_HtpX_like"/>
    <property type="match status" value="1"/>
</dbReference>
<dbReference type="FunFam" id="3.30.2010.10:FF:000001">
    <property type="entry name" value="Protease HtpX"/>
    <property type="match status" value="1"/>
</dbReference>
<dbReference type="Gene3D" id="3.30.2010.10">
    <property type="entry name" value="Metalloproteases ('zincins'), catalytic domain"/>
    <property type="match status" value="1"/>
</dbReference>
<dbReference type="HAMAP" id="MF_00188">
    <property type="entry name" value="Pept_M48_protease_HtpX"/>
    <property type="match status" value="1"/>
</dbReference>
<dbReference type="InterPro" id="IPR050083">
    <property type="entry name" value="HtpX_protease"/>
</dbReference>
<dbReference type="InterPro" id="IPR022919">
    <property type="entry name" value="Pept_M48_protease_HtpX"/>
</dbReference>
<dbReference type="InterPro" id="IPR001915">
    <property type="entry name" value="Peptidase_M48"/>
</dbReference>
<dbReference type="NCBIfam" id="NF003965">
    <property type="entry name" value="PRK05457.1"/>
    <property type="match status" value="1"/>
</dbReference>
<dbReference type="PANTHER" id="PTHR43221">
    <property type="entry name" value="PROTEASE HTPX"/>
    <property type="match status" value="1"/>
</dbReference>
<dbReference type="PANTHER" id="PTHR43221:SF1">
    <property type="entry name" value="PROTEASE HTPX"/>
    <property type="match status" value="1"/>
</dbReference>
<dbReference type="Pfam" id="PF01435">
    <property type="entry name" value="Peptidase_M48"/>
    <property type="match status" value="1"/>
</dbReference>
<sequence>MSKRVILFLLTNLAITFVLGIVLNIIFQVTGIKGTSTTGILMMSLLFGFTGSLISLFMSKSMALRSVGAEVIQQPRNQAEQWLFNTVQRQSQKAGIPMPDIAIYHSADVNAFATGATKNNSLVAVSTGLLDNMTEDEAEAVVAHEIAHIANGDMVTMTLLQGVLNTFVIFLSRMISTAVSGSRDENGNSTQNTLVFWVVDIALQMIFGILATMIAMWFSRYREYRADMGSAQLVGKEKMIAALERLRHVHEPQEMQGSLSAFMINGIRSKELFMSHPPLEKRIEALRNL</sequence>
<organism>
    <name type="scientific">Haemophilus ducreyi (strain 35000HP / ATCC 700724)</name>
    <dbReference type="NCBI Taxonomy" id="233412"/>
    <lineage>
        <taxon>Bacteria</taxon>
        <taxon>Pseudomonadati</taxon>
        <taxon>Pseudomonadota</taxon>
        <taxon>Gammaproteobacteria</taxon>
        <taxon>Pasteurellales</taxon>
        <taxon>Pasteurellaceae</taxon>
        <taxon>Haemophilus</taxon>
    </lineage>
</organism>
<protein>
    <recommendedName>
        <fullName evidence="1">Protease HtpX</fullName>
        <ecNumber evidence="1">3.4.24.-</ecNumber>
    </recommendedName>
    <alternativeName>
        <fullName evidence="1">Heat shock protein HtpX</fullName>
    </alternativeName>
</protein>
<keyword id="KW-0997">Cell inner membrane</keyword>
<keyword id="KW-1003">Cell membrane</keyword>
<keyword id="KW-0378">Hydrolase</keyword>
<keyword id="KW-0472">Membrane</keyword>
<keyword id="KW-0479">Metal-binding</keyword>
<keyword id="KW-0482">Metalloprotease</keyword>
<keyword id="KW-0645">Protease</keyword>
<keyword id="KW-1185">Reference proteome</keyword>
<keyword id="KW-0812">Transmembrane</keyword>
<keyword id="KW-1133">Transmembrane helix</keyword>
<keyword id="KW-0862">Zinc</keyword>